<gene>
    <name type="primary">LBX1</name>
    <name type="synonym">LBX1H</name>
</gene>
<sequence>MTSKEDGKAAPGEERRRSPLDHLPPPANSNKPLTPFSIEDILNKPSVRRSYSLCGAAHLLAAADKHAQGGLPLAGRALLSQTSPLCALEELASKTFKGLEVSVLQAAEGRDGMTIFGQRQTPKKRRKSRTAFTNHQIYELEKRFLYQKYLSPADRDQIAQQLGLTNAQVITWFQNRRAKLKRDLEEMKADVESAKKLGPSGQMDIVALAELEQNSEATAGGGGGCGRAKSRPGSPVLPPGAPKAPGAGALQLSPASPLTDQPASSQDCSEDEEDEEIDVDD</sequence>
<dbReference type="EMBL" id="X90828">
    <property type="protein sequence ID" value="CAA62342.1"/>
    <property type="molecule type" value="mRNA"/>
</dbReference>
<dbReference type="EMBL" id="AL135794">
    <property type="status" value="NOT_ANNOTATED_CDS"/>
    <property type="molecule type" value="Genomic_DNA"/>
</dbReference>
<dbReference type="EMBL" id="CH471066">
    <property type="protein sequence ID" value="EAW49777.1"/>
    <property type="molecule type" value="Genomic_DNA"/>
</dbReference>
<dbReference type="EMBL" id="BC069156">
    <property type="protein sequence ID" value="AAH69156.1"/>
    <property type="molecule type" value="mRNA"/>
</dbReference>
<dbReference type="EMBL" id="BC136321">
    <property type="protein sequence ID" value="AAI36322.1"/>
    <property type="molecule type" value="mRNA"/>
</dbReference>
<dbReference type="CCDS" id="CCDS31270.1"/>
<dbReference type="RefSeq" id="NP_006553.2">
    <property type="nucleotide sequence ID" value="NM_006562.5"/>
</dbReference>
<dbReference type="SMR" id="P52954"/>
<dbReference type="BioGRID" id="115903">
    <property type="interactions" value="27"/>
</dbReference>
<dbReference type="FunCoup" id="P52954">
    <property type="interactions" value="351"/>
</dbReference>
<dbReference type="IntAct" id="P52954">
    <property type="interactions" value="24"/>
</dbReference>
<dbReference type="STRING" id="9606.ENSP00000359212"/>
<dbReference type="iPTMnet" id="P52954"/>
<dbReference type="PhosphoSitePlus" id="P52954"/>
<dbReference type="BioMuta" id="LBX1"/>
<dbReference type="DMDM" id="117949813"/>
<dbReference type="MassIVE" id="P52954"/>
<dbReference type="PaxDb" id="9606-ENSP00000359212"/>
<dbReference type="PeptideAtlas" id="P52954"/>
<dbReference type="ProteomicsDB" id="56564"/>
<dbReference type="Antibodypedia" id="911">
    <property type="antibodies" value="175 antibodies from 26 providers"/>
</dbReference>
<dbReference type="CPTC" id="P52954">
    <property type="antibodies" value="3 antibodies"/>
</dbReference>
<dbReference type="DNASU" id="10660"/>
<dbReference type="Ensembl" id="ENST00000370193.4">
    <property type="protein sequence ID" value="ENSP00000359212.2"/>
    <property type="gene ID" value="ENSG00000138136.7"/>
</dbReference>
<dbReference type="GeneID" id="10660"/>
<dbReference type="KEGG" id="hsa:10660"/>
<dbReference type="MANE-Select" id="ENST00000370193.4">
    <property type="protein sequence ID" value="ENSP00000359212.2"/>
    <property type="RefSeq nucleotide sequence ID" value="NM_006562.5"/>
    <property type="RefSeq protein sequence ID" value="NP_006553.2"/>
</dbReference>
<dbReference type="UCSC" id="uc001ksx.4">
    <property type="organism name" value="human"/>
</dbReference>
<dbReference type="AGR" id="HGNC:16960"/>
<dbReference type="CTD" id="10660"/>
<dbReference type="DisGeNET" id="10660"/>
<dbReference type="GeneCards" id="LBX1"/>
<dbReference type="HGNC" id="HGNC:16960">
    <property type="gene designation" value="LBX1"/>
</dbReference>
<dbReference type="HPA" id="ENSG00000138136">
    <property type="expression patterns" value="Tissue enriched (skeletal)"/>
</dbReference>
<dbReference type="MalaCards" id="LBX1"/>
<dbReference type="MIM" id="604255">
    <property type="type" value="gene"/>
</dbReference>
<dbReference type="MIM" id="619483">
    <property type="type" value="phenotype"/>
</dbReference>
<dbReference type="neXtProt" id="NX_P52954"/>
<dbReference type="OpenTargets" id="ENSG00000138136"/>
<dbReference type="Orphanet" id="661">
    <property type="disease" value="Congenital central hypoventilation syndrome"/>
</dbReference>
<dbReference type="PharmGKB" id="PA142671561"/>
<dbReference type="VEuPathDB" id="HostDB:ENSG00000138136"/>
<dbReference type="eggNOG" id="KOG0488">
    <property type="taxonomic scope" value="Eukaryota"/>
</dbReference>
<dbReference type="GeneTree" id="ENSGT00940000161756"/>
<dbReference type="HOGENOM" id="CLU_086390_0_0_1"/>
<dbReference type="InParanoid" id="P52954"/>
<dbReference type="OMA" id="THPKHGL"/>
<dbReference type="OrthoDB" id="6159439at2759"/>
<dbReference type="PAN-GO" id="P52954">
    <property type="GO annotations" value="4 GO annotations based on evolutionary models"/>
</dbReference>
<dbReference type="PhylomeDB" id="P52954"/>
<dbReference type="TreeFam" id="TF325047"/>
<dbReference type="PathwayCommons" id="P52954"/>
<dbReference type="SignaLink" id="P52954"/>
<dbReference type="SIGNOR" id="P52954"/>
<dbReference type="BioGRID-ORCS" id="10660">
    <property type="hits" value="10 hits in 1172 CRISPR screens"/>
</dbReference>
<dbReference type="GeneWiki" id="LBX1"/>
<dbReference type="GenomeRNAi" id="10660"/>
<dbReference type="Pharos" id="P52954">
    <property type="development level" value="Tbio"/>
</dbReference>
<dbReference type="PRO" id="PR:P52954"/>
<dbReference type="Proteomes" id="UP000005640">
    <property type="component" value="Chromosome 10"/>
</dbReference>
<dbReference type="RNAct" id="P52954">
    <property type="molecule type" value="protein"/>
</dbReference>
<dbReference type="Bgee" id="ENSG00000138136">
    <property type="expression patterns" value="Expressed in gastrocnemius and 19 other cell types or tissues"/>
</dbReference>
<dbReference type="GO" id="GO:0000785">
    <property type="term" value="C:chromatin"/>
    <property type="evidence" value="ECO:0000247"/>
    <property type="project" value="NTNU_SB"/>
</dbReference>
<dbReference type="GO" id="GO:0005634">
    <property type="term" value="C:nucleus"/>
    <property type="evidence" value="ECO:0000318"/>
    <property type="project" value="GO_Central"/>
</dbReference>
<dbReference type="GO" id="GO:0005667">
    <property type="term" value="C:transcription regulator complex"/>
    <property type="evidence" value="ECO:0007669"/>
    <property type="project" value="Ensembl"/>
</dbReference>
<dbReference type="GO" id="GO:0000981">
    <property type="term" value="F:DNA-binding transcription factor activity, RNA polymerase II-specific"/>
    <property type="evidence" value="ECO:0000247"/>
    <property type="project" value="NTNU_SB"/>
</dbReference>
<dbReference type="GO" id="GO:1990837">
    <property type="term" value="F:sequence-specific double-stranded DNA binding"/>
    <property type="evidence" value="ECO:0000318"/>
    <property type="project" value="GO_Central"/>
</dbReference>
<dbReference type="GO" id="GO:0009653">
    <property type="term" value="P:anatomical structure morphogenesis"/>
    <property type="evidence" value="ECO:0000304"/>
    <property type="project" value="ProtInc"/>
</dbReference>
<dbReference type="GO" id="GO:0008283">
    <property type="term" value="P:cell population proliferation"/>
    <property type="evidence" value="ECO:0007669"/>
    <property type="project" value="Ensembl"/>
</dbReference>
<dbReference type="GO" id="GO:1905962">
    <property type="term" value="P:glutamatergic neuron differentiation"/>
    <property type="evidence" value="ECO:0007669"/>
    <property type="project" value="Ensembl"/>
</dbReference>
<dbReference type="GO" id="GO:0001947">
    <property type="term" value="P:heart looping"/>
    <property type="evidence" value="ECO:0007669"/>
    <property type="project" value="Ensembl"/>
</dbReference>
<dbReference type="GO" id="GO:0007517">
    <property type="term" value="P:muscle organ development"/>
    <property type="evidence" value="ECO:0007669"/>
    <property type="project" value="UniProtKB-KW"/>
</dbReference>
<dbReference type="GO" id="GO:0008285">
    <property type="term" value="P:negative regulation of cell population proliferation"/>
    <property type="evidence" value="ECO:0007669"/>
    <property type="project" value="Ensembl"/>
</dbReference>
<dbReference type="GO" id="GO:0120007">
    <property type="term" value="P:negative regulation of glutamatergic neuron differentiation"/>
    <property type="evidence" value="ECO:0007669"/>
    <property type="project" value="Ensembl"/>
</dbReference>
<dbReference type="GO" id="GO:0048664">
    <property type="term" value="P:neuron fate determination"/>
    <property type="evidence" value="ECO:0007669"/>
    <property type="project" value="Ensembl"/>
</dbReference>
<dbReference type="GO" id="GO:0006357">
    <property type="term" value="P:regulation of transcription by RNA polymerase II"/>
    <property type="evidence" value="ECO:0000318"/>
    <property type="project" value="GO_Central"/>
</dbReference>
<dbReference type="GO" id="GO:0021522">
    <property type="term" value="P:spinal cord motor neuron differentiation"/>
    <property type="evidence" value="ECO:0007669"/>
    <property type="project" value="Ensembl"/>
</dbReference>
<dbReference type="CDD" id="cd00086">
    <property type="entry name" value="homeodomain"/>
    <property type="match status" value="1"/>
</dbReference>
<dbReference type="FunFam" id="1.10.10.60:FF:000098">
    <property type="entry name" value="Transcription factor LBX1"/>
    <property type="match status" value="1"/>
</dbReference>
<dbReference type="Gene3D" id="1.10.10.60">
    <property type="entry name" value="Homeodomain-like"/>
    <property type="match status" value="1"/>
</dbReference>
<dbReference type="InterPro" id="IPR001356">
    <property type="entry name" value="HD"/>
</dbReference>
<dbReference type="InterPro" id="IPR017970">
    <property type="entry name" value="Homeobox_CS"/>
</dbReference>
<dbReference type="InterPro" id="IPR009057">
    <property type="entry name" value="Homeodomain-like_sf"/>
</dbReference>
<dbReference type="InterPro" id="IPR000047">
    <property type="entry name" value="HTH_motif"/>
</dbReference>
<dbReference type="InterPro" id="IPR051892">
    <property type="entry name" value="LBX_TF"/>
</dbReference>
<dbReference type="PANTHER" id="PTHR24336">
    <property type="entry name" value="TRANSCRIPTION FACTOR LBX"/>
    <property type="match status" value="1"/>
</dbReference>
<dbReference type="PANTHER" id="PTHR24336:SF9">
    <property type="entry name" value="TRANSCRIPTION FACTOR LBX1"/>
    <property type="match status" value="1"/>
</dbReference>
<dbReference type="Pfam" id="PF00046">
    <property type="entry name" value="Homeodomain"/>
    <property type="match status" value="1"/>
</dbReference>
<dbReference type="PRINTS" id="PR00031">
    <property type="entry name" value="HTHREPRESSR"/>
</dbReference>
<dbReference type="SMART" id="SM00389">
    <property type="entry name" value="HOX"/>
    <property type="match status" value="1"/>
</dbReference>
<dbReference type="SUPFAM" id="SSF46689">
    <property type="entry name" value="Homeodomain-like"/>
    <property type="match status" value="1"/>
</dbReference>
<dbReference type="PROSITE" id="PS00027">
    <property type="entry name" value="HOMEOBOX_1"/>
    <property type="match status" value="1"/>
</dbReference>
<dbReference type="PROSITE" id="PS50071">
    <property type="entry name" value="HOMEOBOX_2"/>
    <property type="match status" value="1"/>
</dbReference>
<name>LBX1_HUMAN</name>
<proteinExistence type="evidence at protein level"/>
<reference key="1">
    <citation type="journal article" date="1995" name="Mech. Dev.">
        <title>Mouse Lbx1 and human LBX1 define a novel mammalian homeobox gene family related to the Drosophila lady bird genes.</title>
        <authorList>
            <person name="Jagla K."/>
            <person name="Dolle P."/>
            <person name="Mattei M.-G."/>
            <person name="Jagla T."/>
            <person name="Schuhbaur B."/>
            <person name="Dretzen G."/>
            <person name="Bellard F."/>
            <person name="Bellard M."/>
        </authorList>
    </citation>
    <scope>NUCLEOTIDE SEQUENCE [MRNA]</scope>
</reference>
<reference key="2">
    <citation type="journal article" date="2004" name="Nature">
        <title>The DNA sequence and comparative analysis of human chromosome 10.</title>
        <authorList>
            <person name="Deloukas P."/>
            <person name="Earthrowl M.E."/>
            <person name="Grafham D.V."/>
            <person name="Rubenfield M."/>
            <person name="French L."/>
            <person name="Steward C.A."/>
            <person name="Sims S.K."/>
            <person name="Jones M.C."/>
            <person name="Searle S."/>
            <person name="Scott C."/>
            <person name="Howe K."/>
            <person name="Hunt S.E."/>
            <person name="Andrews T.D."/>
            <person name="Gilbert J.G.R."/>
            <person name="Swarbreck D."/>
            <person name="Ashurst J.L."/>
            <person name="Taylor A."/>
            <person name="Battles J."/>
            <person name="Bird C.P."/>
            <person name="Ainscough R."/>
            <person name="Almeida J.P."/>
            <person name="Ashwell R.I.S."/>
            <person name="Ambrose K.D."/>
            <person name="Babbage A.K."/>
            <person name="Bagguley C.L."/>
            <person name="Bailey J."/>
            <person name="Banerjee R."/>
            <person name="Bates K."/>
            <person name="Beasley H."/>
            <person name="Bray-Allen S."/>
            <person name="Brown A.J."/>
            <person name="Brown J.Y."/>
            <person name="Burford D.C."/>
            <person name="Burrill W."/>
            <person name="Burton J."/>
            <person name="Cahill P."/>
            <person name="Camire D."/>
            <person name="Carter N.P."/>
            <person name="Chapman J.C."/>
            <person name="Clark S.Y."/>
            <person name="Clarke G."/>
            <person name="Clee C.M."/>
            <person name="Clegg S."/>
            <person name="Corby N."/>
            <person name="Coulson A."/>
            <person name="Dhami P."/>
            <person name="Dutta I."/>
            <person name="Dunn M."/>
            <person name="Faulkner L."/>
            <person name="Frankish A."/>
            <person name="Frankland J.A."/>
            <person name="Garner P."/>
            <person name="Garnett J."/>
            <person name="Gribble S."/>
            <person name="Griffiths C."/>
            <person name="Grocock R."/>
            <person name="Gustafson E."/>
            <person name="Hammond S."/>
            <person name="Harley J.L."/>
            <person name="Hart E."/>
            <person name="Heath P.D."/>
            <person name="Ho T.P."/>
            <person name="Hopkins B."/>
            <person name="Horne J."/>
            <person name="Howden P.J."/>
            <person name="Huckle E."/>
            <person name="Hynds C."/>
            <person name="Johnson C."/>
            <person name="Johnson D."/>
            <person name="Kana A."/>
            <person name="Kay M."/>
            <person name="Kimberley A.M."/>
            <person name="Kershaw J.K."/>
            <person name="Kokkinaki M."/>
            <person name="Laird G.K."/>
            <person name="Lawlor S."/>
            <person name="Lee H.M."/>
            <person name="Leongamornlert D.A."/>
            <person name="Laird G."/>
            <person name="Lloyd C."/>
            <person name="Lloyd D.M."/>
            <person name="Loveland J."/>
            <person name="Lovell J."/>
            <person name="McLaren S."/>
            <person name="McLay K.E."/>
            <person name="McMurray A."/>
            <person name="Mashreghi-Mohammadi M."/>
            <person name="Matthews L."/>
            <person name="Milne S."/>
            <person name="Nickerson T."/>
            <person name="Nguyen M."/>
            <person name="Overton-Larty E."/>
            <person name="Palmer S.A."/>
            <person name="Pearce A.V."/>
            <person name="Peck A.I."/>
            <person name="Pelan S."/>
            <person name="Phillimore B."/>
            <person name="Porter K."/>
            <person name="Rice C.M."/>
            <person name="Rogosin A."/>
            <person name="Ross M.T."/>
            <person name="Sarafidou T."/>
            <person name="Sehra H.K."/>
            <person name="Shownkeen R."/>
            <person name="Skuce C.D."/>
            <person name="Smith M."/>
            <person name="Standring L."/>
            <person name="Sycamore N."/>
            <person name="Tester J."/>
            <person name="Thorpe A."/>
            <person name="Torcasso W."/>
            <person name="Tracey A."/>
            <person name="Tromans A."/>
            <person name="Tsolas J."/>
            <person name="Wall M."/>
            <person name="Walsh J."/>
            <person name="Wang H."/>
            <person name="Weinstock K."/>
            <person name="West A.P."/>
            <person name="Willey D.L."/>
            <person name="Whitehead S.L."/>
            <person name="Wilming L."/>
            <person name="Wray P.W."/>
            <person name="Young L."/>
            <person name="Chen Y."/>
            <person name="Lovering R.C."/>
            <person name="Moschonas N.K."/>
            <person name="Siebert R."/>
            <person name="Fechtel K."/>
            <person name="Bentley D."/>
            <person name="Durbin R.M."/>
            <person name="Hubbard T."/>
            <person name="Doucette-Stamm L."/>
            <person name="Beck S."/>
            <person name="Smith D.R."/>
            <person name="Rogers J."/>
        </authorList>
    </citation>
    <scope>NUCLEOTIDE SEQUENCE [LARGE SCALE GENOMIC DNA]</scope>
</reference>
<reference key="3">
    <citation type="submission" date="2005-09" db="EMBL/GenBank/DDBJ databases">
        <authorList>
            <person name="Mural R.J."/>
            <person name="Istrail S."/>
            <person name="Sutton G.G."/>
            <person name="Florea L."/>
            <person name="Halpern A.L."/>
            <person name="Mobarry C.M."/>
            <person name="Lippert R."/>
            <person name="Walenz B."/>
            <person name="Shatkay H."/>
            <person name="Dew I."/>
            <person name="Miller J.R."/>
            <person name="Flanigan M.J."/>
            <person name="Edwards N.J."/>
            <person name="Bolanos R."/>
            <person name="Fasulo D."/>
            <person name="Halldorsson B.V."/>
            <person name="Hannenhalli S."/>
            <person name="Turner R."/>
            <person name="Yooseph S."/>
            <person name="Lu F."/>
            <person name="Nusskern D.R."/>
            <person name="Shue B.C."/>
            <person name="Zheng X.H."/>
            <person name="Zhong F."/>
            <person name="Delcher A.L."/>
            <person name="Huson D.H."/>
            <person name="Kravitz S.A."/>
            <person name="Mouchard L."/>
            <person name="Reinert K."/>
            <person name="Remington K.A."/>
            <person name="Clark A.G."/>
            <person name="Waterman M.S."/>
            <person name="Eichler E.E."/>
            <person name="Adams M.D."/>
            <person name="Hunkapiller M.W."/>
            <person name="Myers E.W."/>
            <person name="Venter J.C."/>
        </authorList>
    </citation>
    <scope>NUCLEOTIDE SEQUENCE [LARGE SCALE GENOMIC DNA]</scope>
</reference>
<reference key="4">
    <citation type="journal article" date="2004" name="Genome Res.">
        <title>The status, quality, and expansion of the NIH full-length cDNA project: the Mammalian Gene Collection (MGC).</title>
        <authorList>
            <consortium name="The MGC Project Team"/>
        </authorList>
    </citation>
    <scope>NUCLEOTIDE SEQUENCE [LARGE SCALE MRNA]</scope>
    <source>
        <tissue>Testis</tissue>
    </source>
</reference>
<reference key="5">
    <citation type="journal article" date="2018" name="Proc. Natl. Acad. Sci. U.S.A.">
        <title>Mutation in LBX1/Lbx1 precludes transcription factor cooperativity and causes congenital hypoventilation in humans and mice.</title>
        <authorList>
            <person name="Hernandez-Miranda L.R."/>
            <person name="Ibrahim D.M."/>
            <person name="Ruffault P.L."/>
            <person name="Larrosa M."/>
            <person name="Balueva K."/>
            <person name="Mueller T."/>
            <person name="Weerd W."/>
            <person name="Stolte-Dijkstra I."/>
            <person name="Hostra R.M.W."/>
            <person name="Brunet J.F."/>
            <person name="Fortin G."/>
            <person name="Mundlos S."/>
            <person name="Birchmeier C."/>
        </authorList>
    </citation>
    <scope>INVOLVEMENT IN CCHS3</scope>
</reference>
<comment type="function">
    <text evidence="1">Transcription factor required for the development of GABAergic interneurons in the dorsal horn of the spinal cord and migration and further development of hypaxial muscle precursor cells for limb muscles, diaphragm and hypoglossal cord.</text>
</comment>
<comment type="subunit">
    <text evidence="1">Interacts with SKOR1 which acts as a transcriptional corepressor.</text>
</comment>
<comment type="interaction">
    <interactant intactId="EBI-20141748">
        <id>P52954</id>
    </interactant>
    <interactant intactId="EBI-6557414">
        <id>Q9NZN9</id>
        <label>AIPL1</label>
    </interactant>
    <organismsDiffer>false</organismsDiffer>
    <experiments>3</experiments>
</comment>
<comment type="interaction">
    <interactant intactId="EBI-20141748">
        <id>P52954</id>
    </interactant>
    <interactant intactId="EBI-1055572">
        <id>P17661</id>
        <label>DES</label>
    </interactant>
    <organismsDiffer>false</organismsDiffer>
    <experiments>3</experiments>
</comment>
<comment type="interaction">
    <interactant intactId="EBI-20141748">
        <id>P52954</id>
    </interactant>
    <interactant intactId="EBI-743414">
        <id>O95967</id>
        <label>EFEMP2</label>
    </interactant>
    <organismsDiffer>false</organismsDiffer>
    <experiments>3</experiments>
</comment>
<comment type="interaction">
    <interactant intactId="EBI-20141748">
        <id>P52954</id>
    </interactant>
    <interactant intactId="EBI-373150">
        <id>P63241</id>
        <label>EIF5A</label>
    </interactant>
    <organismsDiffer>false</organismsDiffer>
    <experiments>3</experiments>
</comment>
<comment type="interaction">
    <interactant intactId="EBI-20141748">
        <id>P52954</id>
    </interactant>
    <interactant intactId="EBI-12006844">
        <id>A6H8Z2</id>
        <label>FAM221B</label>
    </interactant>
    <organismsDiffer>false</organismsDiffer>
    <experiments>3</experiments>
</comment>
<comment type="interaction">
    <interactant intactId="EBI-20141748">
        <id>P52954</id>
    </interactant>
    <interactant intactId="EBI-10175124">
        <id>Q8IZU0</id>
        <label>FAM9B</label>
    </interactant>
    <organismsDiffer>false</organismsDiffer>
    <experiments>3</experiments>
</comment>
<comment type="interaction">
    <interactant intactId="EBI-20141748">
        <id>P52954</id>
    </interactant>
    <interactant intactId="EBI-297509">
        <id>P46940</id>
        <label>IQGAP1</label>
    </interactant>
    <organismsDiffer>false</organismsDiffer>
    <experiments>3</experiments>
</comment>
<comment type="interaction">
    <interactant intactId="EBI-20141748">
        <id>P52954</id>
    </interactant>
    <interactant intactId="EBI-2556193">
        <id>Q63ZY3</id>
        <label>KANK2</label>
    </interactant>
    <organismsDiffer>false</organismsDiffer>
    <experiments>3</experiments>
</comment>
<comment type="interaction">
    <interactant intactId="EBI-20141748">
        <id>P52954</id>
    </interactant>
    <interactant intactId="EBI-355878">
        <id>P33176</id>
        <label>KIF5B</label>
    </interactant>
    <organismsDiffer>false</organismsDiffer>
    <experiments>3</experiments>
</comment>
<comment type="interaction">
    <interactant intactId="EBI-20141748">
        <id>P52954</id>
    </interactant>
    <interactant intactId="EBI-14069005">
        <id>Q9BVG8-5</id>
        <label>KIFC3</label>
    </interactant>
    <organismsDiffer>false</organismsDiffer>
    <experiments>3</experiments>
</comment>
<comment type="interaction">
    <interactant intactId="EBI-20141748">
        <id>P52954</id>
    </interactant>
    <interactant intactId="EBI-10250562">
        <id>Q6L8G9</id>
        <label>KRTAP5-6</label>
    </interactant>
    <organismsDiffer>false</organismsDiffer>
    <experiments>3</experiments>
</comment>
<comment type="interaction">
    <interactant intactId="EBI-20141748">
        <id>P52954</id>
    </interactant>
    <interactant intactId="EBI-1044640">
        <id>Q9BYQ4</id>
        <label>KRTAP9-2</label>
    </interactant>
    <organismsDiffer>false</organismsDiffer>
    <experiments>3</experiments>
</comment>
<comment type="interaction">
    <interactant intactId="EBI-20141748">
        <id>P52954</id>
    </interactant>
    <interactant intactId="EBI-10268010">
        <id>Q8N8X9</id>
        <label>MAB21L3</label>
    </interactant>
    <organismsDiffer>false</organismsDiffer>
    <experiments>3</experiments>
</comment>
<comment type="interaction">
    <interactant intactId="EBI-20141748">
        <id>P52954</id>
    </interactant>
    <interactant intactId="EBI-530034">
        <id>O43189</id>
        <label>PHF1</label>
    </interactant>
    <organismsDiffer>false</organismsDiffer>
    <experiments>3</experiments>
</comment>
<comment type="interaction">
    <interactant intactId="EBI-20141748">
        <id>P52954</id>
    </interactant>
    <interactant intactId="EBI-1567797">
        <id>Q8WWY3</id>
        <label>PRPF31</label>
    </interactant>
    <organismsDiffer>false</organismsDiffer>
    <experiments>3</experiments>
</comment>
<comment type="interaction">
    <interactant intactId="EBI-20141748">
        <id>P52954</id>
    </interactant>
    <interactant intactId="EBI-2798044">
        <id>Q2TAL8</id>
        <label>QRICH1</label>
    </interactant>
    <organismsDiffer>false</organismsDiffer>
    <experiments>3</experiments>
</comment>
<comment type="interaction">
    <interactant intactId="EBI-20141748">
        <id>P52954</id>
    </interactant>
    <interactant intactId="EBI-10244795">
        <id>Q5QJ74</id>
        <label>TBCEL</label>
    </interactant>
    <organismsDiffer>false</organismsDiffer>
    <experiments>3</experiments>
</comment>
<comment type="interaction">
    <interactant intactId="EBI-20141748">
        <id>P52954</id>
    </interactant>
    <interactant intactId="EBI-8787626">
        <id>Q8N6L7</id>
        <label>TMEM252</label>
    </interactant>
    <organismsDiffer>false</organismsDiffer>
    <experiments>3</experiments>
</comment>
<comment type="interaction">
    <interactant intactId="EBI-20141748">
        <id>P52954</id>
    </interactant>
    <interactant intactId="EBI-3918381">
        <id>Q96PN8</id>
        <label>TSSK3</label>
    </interactant>
    <organismsDiffer>false</organismsDiffer>
    <experiments>3</experiments>
</comment>
<comment type="interaction">
    <interactant intactId="EBI-20141748">
        <id>P52954</id>
    </interactant>
    <interactant intactId="EBI-17208936">
        <id>P0CB47</id>
        <label>UBTFL1</label>
    </interactant>
    <organismsDiffer>false</organismsDiffer>
    <experiments>3</experiments>
</comment>
<comment type="interaction">
    <interactant intactId="EBI-20141748">
        <id>P52954</id>
    </interactant>
    <interactant intactId="EBI-1182602">
        <id>Q9BYP7</id>
        <label>WNK3</label>
    </interactant>
    <organismsDiffer>false</organismsDiffer>
    <experiments>3</experiments>
</comment>
<comment type="interaction">
    <interactant intactId="EBI-20141748">
        <id>P52954</id>
    </interactant>
    <interactant intactId="EBI-10196963">
        <id>Q6P088</id>
        <label>ZNF483</label>
    </interactant>
    <organismsDiffer>false</organismsDiffer>
    <experiments>3</experiments>
</comment>
<comment type="interaction">
    <interactant intactId="EBI-20141748">
        <id>P52954</id>
    </interactant>
    <interactant intactId="EBI-25475920">
        <id>PRO_0000449631</id>
        <label>rep</label>
        <dbReference type="UniProtKB" id="P0DTD1"/>
    </interactant>
    <organismsDiffer>true</organismsDiffer>
    <experiments>3</experiments>
</comment>
<comment type="interaction">
    <interactant intactId="EBI-20141748">
        <id>P52954</id>
    </interactant>
    <interactant intactId="EBI-25492395">
        <id>PRO_0000449633</id>
        <label>rep</label>
        <dbReference type="UniProtKB" id="P0DTD1"/>
    </interactant>
    <organismsDiffer>true</organismsDiffer>
    <experiments>3</experiments>
</comment>
<comment type="interaction">
    <interactant intactId="EBI-20141748">
        <id>P52954</id>
    </interactant>
    <interactant intactId="EBI-26953451">
        <id>P0DTF1</id>
    </interactant>
    <organismsDiffer>true</organismsDiffer>
    <experiments>3</experiments>
</comment>
<comment type="subcellular location">
    <subcellularLocation>
        <location evidence="5">Nucleus</location>
    </subcellularLocation>
</comment>
<comment type="disease" evidence="4">
    <disease id="DI-06215">
        <name>Central hypoventilation syndrome, congenital, 3</name>
        <acronym>CCHS3</acronym>
        <description>A form of congenital central hypoventilation syndrome, a rare disorder characterized by abnormal control of respiration in the absence of neuromuscular, lung or cardiac disease, or an identifiable brainstem lesion. CCHS3 is an autosomal recessive, neonatal form characterized by slow and shallow breathing due to a deficiency in autonomic control of respiration. Affected individuals present with respiratory insufficiency and absence of the hypercapnic reflex that stimulates breathing. Additional features include gastrointestinal problems, poor heat tolerance and paroxysmal hypertension.</description>
        <dbReference type="MIM" id="619483"/>
    </disease>
    <text>The disease may be caused by variants affecting the gene represented in this entry.</text>
</comment>
<protein>
    <recommendedName>
        <fullName>Transcription factor LBX1</fullName>
    </recommendedName>
    <alternativeName>
        <fullName>Ladybird homeobox protein homolog 1</fullName>
    </alternativeName>
</protein>
<evidence type="ECO:0000250" key="1"/>
<evidence type="ECO:0000255" key="2">
    <source>
        <dbReference type="PROSITE-ProRule" id="PRU00108"/>
    </source>
</evidence>
<evidence type="ECO:0000256" key="3">
    <source>
        <dbReference type="SAM" id="MobiDB-lite"/>
    </source>
</evidence>
<evidence type="ECO:0000269" key="4">
    <source>
    </source>
</evidence>
<evidence type="ECO:0000305" key="5"/>
<organism>
    <name type="scientific">Homo sapiens</name>
    <name type="common">Human</name>
    <dbReference type="NCBI Taxonomy" id="9606"/>
    <lineage>
        <taxon>Eukaryota</taxon>
        <taxon>Metazoa</taxon>
        <taxon>Chordata</taxon>
        <taxon>Craniata</taxon>
        <taxon>Vertebrata</taxon>
        <taxon>Euteleostomi</taxon>
        <taxon>Mammalia</taxon>
        <taxon>Eutheria</taxon>
        <taxon>Euarchontoglires</taxon>
        <taxon>Primates</taxon>
        <taxon>Haplorrhini</taxon>
        <taxon>Catarrhini</taxon>
        <taxon>Hominidae</taxon>
        <taxon>Homo</taxon>
    </lineage>
</organism>
<keyword id="KW-0217">Developmental protein</keyword>
<keyword id="KW-0221">Differentiation</keyword>
<keyword id="KW-0238">DNA-binding</keyword>
<keyword id="KW-0371">Homeobox</keyword>
<keyword id="KW-0517">Myogenesis</keyword>
<keyword id="KW-0524">Neurogenesis</keyword>
<keyword id="KW-0539">Nucleus</keyword>
<keyword id="KW-1267">Proteomics identification</keyword>
<keyword id="KW-1185">Reference proteome</keyword>
<keyword id="KW-0804">Transcription</keyword>
<keyword id="KW-0805">Transcription regulation</keyword>
<accession>P52954</accession>
<accession>B9EGA2</accession>
<accession>Q05BB2</accession>
<feature type="chain" id="PRO_0000049166" description="Transcription factor LBX1">
    <location>
        <begin position="1"/>
        <end position="281"/>
    </location>
</feature>
<feature type="DNA-binding region" description="Homeobox" evidence="2">
    <location>
        <begin position="125"/>
        <end position="184"/>
    </location>
</feature>
<feature type="region of interest" description="Disordered" evidence="3">
    <location>
        <begin position="1"/>
        <end position="35"/>
    </location>
</feature>
<feature type="region of interest" description="Disordered" evidence="3">
    <location>
        <begin position="214"/>
        <end position="281"/>
    </location>
</feature>
<feature type="compositionally biased region" description="Basic and acidic residues" evidence="3">
    <location>
        <begin position="1"/>
        <end position="20"/>
    </location>
</feature>
<feature type="compositionally biased region" description="Polar residues" evidence="3">
    <location>
        <begin position="253"/>
        <end position="267"/>
    </location>
</feature>
<feature type="compositionally biased region" description="Acidic residues" evidence="3">
    <location>
        <begin position="268"/>
        <end position="281"/>
    </location>
</feature>
<feature type="sequence conflict" description="In Ref. 1; CAA62342." evidence="5" ref="1">
    <original>LTPFSIEDILNKPSVRRSYSLCGAAHLLAAADKHAQGGLP</original>
    <variation>YAVQHRGHPQQAVRAEKLLAAWGGAPAGRRGQARAGRLA</variation>
    <location>
        <begin position="33"/>
        <end position="72"/>
    </location>
</feature>
<feature type="sequence conflict" description="In Ref. 1; CAA62342." evidence="5" ref="1">
    <original>Q</original>
    <variation>K</variation>
    <location>
        <position position="81"/>
    </location>
</feature>
<feature type="sequence conflict" description="In Ref. 1; CAA62342." evidence="5" ref="1">
    <original>D</original>
    <variation>E</variation>
    <location>
        <position position="183"/>
    </location>
</feature>
<feature type="sequence conflict" description="In Ref. 1; CAA62342." evidence="5" ref="1">
    <original>A</original>
    <variation>P</variation>
    <location>
        <position position="194"/>
    </location>
</feature>
<feature type="sequence conflict" description="In Ref. 1; CAA62342." evidence="5" ref="1">
    <original>AG</original>
    <variation>RC</variation>
    <location>
        <begin position="247"/>
        <end position="248"/>
    </location>
</feature>